<organism>
    <name type="scientific">Lactobacillus acidophilus (strain ATCC 700396 / NCK56 / N2 / NCFM)</name>
    <dbReference type="NCBI Taxonomy" id="272621"/>
    <lineage>
        <taxon>Bacteria</taxon>
        <taxon>Bacillati</taxon>
        <taxon>Bacillota</taxon>
        <taxon>Bacilli</taxon>
        <taxon>Lactobacillales</taxon>
        <taxon>Lactobacillaceae</taxon>
        <taxon>Lactobacillus</taxon>
    </lineage>
</organism>
<proteinExistence type="inferred from homology"/>
<accession>Q5FK38</accession>
<comment type="function">
    <text evidence="1">Forms oxaloacetate, a four-carbon dicarboxylic acid source for the tricarboxylic acid cycle.</text>
</comment>
<comment type="catalytic activity">
    <reaction evidence="1">
        <text>oxaloacetate + phosphate = phosphoenolpyruvate + hydrogencarbonate</text>
        <dbReference type="Rhea" id="RHEA:28370"/>
        <dbReference type="ChEBI" id="CHEBI:16452"/>
        <dbReference type="ChEBI" id="CHEBI:17544"/>
        <dbReference type="ChEBI" id="CHEBI:43474"/>
        <dbReference type="ChEBI" id="CHEBI:58702"/>
        <dbReference type="EC" id="4.1.1.31"/>
    </reaction>
</comment>
<comment type="cofactor">
    <cofactor evidence="1">
        <name>Mg(2+)</name>
        <dbReference type="ChEBI" id="CHEBI:18420"/>
    </cofactor>
</comment>
<comment type="similarity">
    <text evidence="1">Belongs to the PEPCase type 1 family.</text>
</comment>
<sequence>MTFTKLENSSDQAVVAEEVKILTKLLNESTRQLIGDDAFAKIQDLIDTSASKDQKQLESKISSLNNREMIVVARYFATLPLLINISEDVELASKVNVFNNTDQDYLGKLSDTIDLVAQKDDAKRILENVNVVPVLTAHPTQIQRKTVLELTDKIHHLLRSYRDVKNGTINQREWTEQLRACIEILMQTDIIRGHKLKVSNEITNVLAYYPKALIPAITKFTTRYKELAKEHNLTLDQATPITMGMWIGGDRDGNPYVTADTLELSATLQSQVIFEYYMKELKKLYRAISLSTSYMQPSAAVEKLSKLSNDDSPFRTDEPYRRAFYYIESRLVHTEKELLGIIDKNIFIKPHDLENLDNIPVYNNPQEFKSDLETIKASLDEDHDQAVTHSFFTQILEAIDVFGFHLATIDMRQDSSVNESCVAELLKSAGICDNYSDLSEKEKVELLLSELENDPRNLHANNKPKSELLQKELKIYKTARQLKDRLGEDVIKQHIISHTESVSDMLEQAIMLKEYNLVDSEKARIQVVPLFETVEDLLNAREIITQYLSFPIVKKWLVSQNNYQEIMLGYSDSNKDGGYLASCWNLYKAQKDLTAIGEKLGVKITYMHGRGGTVGRGGGPSYEAITAQPFKSINDRIRMTEQGEIIQNKYGNKDTAYYNLEMLASAAIDRMVSKQAVSEERITDFRSSMDKIVEESNKIYRKLVFENPAFLDYFFQATPIKEISNLNIGSRPASRKKLTDFSGLRAIPWVFSWSQSRIMFPGWYGVGSAFANFINADPTHLKELQEMYKGWPFFHSLLSNVDMFLSKSNMEIAREYASLCDDEETKKVFDIIYQEWKLTKKVILQIEDHDDLLAEAPILKQSLDYRMPYFNILNYIQIEMIKRGREDEIQGVYQSIIPITINGVASGLRNSG</sequence>
<name>CAPP_LACAC</name>
<evidence type="ECO:0000255" key="1">
    <source>
        <dbReference type="HAMAP-Rule" id="MF_00595"/>
    </source>
</evidence>
<protein>
    <recommendedName>
        <fullName evidence="1">Phosphoenolpyruvate carboxylase</fullName>
        <shortName evidence="1">PEPC</shortName>
        <shortName evidence="1">PEPCase</shortName>
        <ecNumber evidence="1">4.1.1.31</ecNumber>
    </recommendedName>
</protein>
<dbReference type="EC" id="4.1.1.31" evidence="1"/>
<dbReference type="EMBL" id="CP000033">
    <property type="protein sequence ID" value="AAV42936.1"/>
    <property type="molecule type" value="Genomic_DNA"/>
</dbReference>
<dbReference type="RefSeq" id="WP_011254335.1">
    <property type="nucleotide sequence ID" value="NC_006814.3"/>
</dbReference>
<dbReference type="RefSeq" id="YP_193967.1">
    <property type="nucleotide sequence ID" value="NC_006814.3"/>
</dbReference>
<dbReference type="SMR" id="Q5FK38"/>
<dbReference type="STRING" id="272621.LBA1092"/>
<dbReference type="KEGG" id="lac:LBA1092"/>
<dbReference type="PATRIC" id="fig|272621.13.peg.1039"/>
<dbReference type="eggNOG" id="COG2352">
    <property type="taxonomic scope" value="Bacteria"/>
</dbReference>
<dbReference type="HOGENOM" id="CLU_006557_2_0_9"/>
<dbReference type="OrthoDB" id="9768133at2"/>
<dbReference type="BioCyc" id="LACI272621:G1G49-1087-MONOMER"/>
<dbReference type="Proteomes" id="UP000006381">
    <property type="component" value="Chromosome"/>
</dbReference>
<dbReference type="GO" id="GO:0005829">
    <property type="term" value="C:cytosol"/>
    <property type="evidence" value="ECO:0007669"/>
    <property type="project" value="TreeGrafter"/>
</dbReference>
<dbReference type="GO" id="GO:0000287">
    <property type="term" value="F:magnesium ion binding"/>
    <property type="evidence" value="ECO:0007669"/>
    <property type="project" value="UniProtKB-UniRule"/>
</dbReference>
<dbReference type="GO" id="GO:0008964">
    <property type="term" value="F:phosphoenolpyruvate carboxylase activity"/>
    <property type="evidence" value="ECO:0007669"/>
    <property type="project" value="UniProtKB-UniRule"/>
</dbReference>
<dbReference type="GO" id="GO:0015977">
    <property type="term" value="P:carbon fixation"/>
    <property type="evidence" value="ECO:0007669"/>
    <property type="project" value="UniProtKB-UniRule"/>
</dbReference>
<dbReference type="GO" id="GO:0006107">
    <property type="term" value="P:oxaloacetate metabolic process"/>
    <property type="evidence" value="ECO:0007669"/>
    <property type="project" value="UniProtKB-UniRule"/>
</dbReference>
<dbReference type="GO" id="GO:0006099">
    <property type="term" value="P:tricarboxylic acid cycle"/>
    <property type="evidence" value="ECO:0007669"/>
    <property type="project" value="InterPro"/>
</dbReference>
<dbReference type="Gene3D" id="1.20.1440.90">
    <property type="entry name" value="Phosphoenolpyruvate/pyruvate domain"/>
    <property type="match status" value="1"/>
</dbReference>
<dbReference type="HAMAP" id="MF_00595">
    <property type="entry name" value="PEPcase_type1"/>
    <property type="match status" value="1"/>
</dbReference>
<dbReference type="InterPro" id="IPR021135">
    <property type="entry name" value="PEP_COase"/>
</dbReference>
<dbReference type="InterPro" id="IPR022805">
    <property type="entry name" value="PEP_COase_bac/pln-type"/>
</dbReference>
<dbReference type="InterPro" id="IPR018129">
    <property type="entry name" value="PEP_COase_Lys_AS"/>
</dbReference>
<dbReference type="InterPro" id="IPR033129">
    <property type="entry name" value="PEPCASE_His_AS"/>
</dbReference>
<dbReference type="InterPro" id="IPR015813">
    <property type="entry name" value="Pyrv/PenolPyrv_kinase-like_dom"/>
</dbReference>
<dbReference type="NCBIfam" id="NF000584">
    <property type="entry name" value="PRK00009.1"/>
    <property type="match status" value="1"/>
</dbReference>
<dbReference type="PANTHER" id="PTHR30523">
    <property type="entry name" value="PHOSPHOENOLPYRUVATE CARBOXYLASE"/>
    <property type="match status" value="1"/>
</dbReference>
<dbReference type="PANTHER" id="PTHR30523:SF6">
    <property type="entry name" value="PHOSPHOENOLPYRUVATE CARBOXYLASE"/>
    <property type="match status" value="1"/>
</dbReference>
<dbReference type="Pfam" id="PF00311">
    <property type="entry name" value="PEPcase"/>
    <property type="match status" value="1"/>
</dbReference>
<dbReference type="PRINTS" id="PR00150">
    <property type="entry name" value="PEPCARBXLASE"/>
</dbReference>
<dbReference type="SUPFAM" id="SSF51621">
    <property type="entry name" value="Phosphoenolpyruvate/pyruvate domain"/>
    <property type="match status" value="1"/>
</dbReference>
<dbReference type="PROSITE" id="PS00781">
    <property type="entry name" value="PEPCASE_1"/>
    <property type="match status" value="1"/>
</dbReference>
<dbReference type="PROSITE" id="PS00393">
    <property type="entry name" value="PEPCASE_2"/>
    <property type="match status" value="1"/>
</dbReference>
<reference key="1">
    <citation type="journal article" date="2005" name="Proc. Natl. Acad. Sci. U.S.A.">
        <title>Complete genome sequence of the probiotic lactic acid bacterium Lactobacillus acidophilus NCFM.</title>
        <authorList>
            <person name="Altermann E."/>
            <person name="Russell W.M."/>
            <person name="Azcarate-Peril M.A."/>
            <person name="Barrangou R."/>
            <person name="Buck B.L."/>
            <person name="McAuliffe O."/>
            <person name="Souther N."/>
            <person name="Dobson A."/>
            <person name="Duong T."/>
            <person name="Callanan M."/>
            <person name="Lick S."/>
            <person name="Hamrick A."/>
            <person name="Cano R."/>
            <person name="Klaenhammer T.R."/>
        </authorList>
    </citation>
    <scope>NUCLEOTIDE SEQUENCE [LARGE SCALE GENOMIC DNA]</scope>
    <source>
        <strain>ATCC 700396 / NCK56 / N2 / NCFM</strain>
    </source>
</reference>
<feature type="chain" id="PRO_0000166598" description="Phosphoenolpyruvate carboxylase">
    <location>
        <begin position="1"/>
        <end position="912"/>
    </location>
</feature>
<feature type="active site" evidence="1">
    <location>
        <position position="138"/>
    </location>
</feature>
<feature type="active site" evidence="1">
    <location>
        <position position="575"/>
    </location>
</feature>
<gene>
    <name evidence="1" type="primary">ppc</name>
    <name type="ordered locus">LBA1092</name>
</gene>
<keyword id="KW-0120">Carbon dioxide fixation</keyword>
<keyword id="KW-0456">Lyase</keyword>
<keyword id="KW-0460">Magnesium</keyword>
<keyword id="KW-1185">Reference proteome</keyword>